<evidence type="ECO:0000250" key="1"/>
<evidence type="ECO:0000250" key="2">
    <source>
        <dbReference type="UniProtKB" id="Q9H4G0"/>
    </source>
</evidence>
<evidence type="ECO:0000250" key="3">
    <source>
        <dbReference type="UniProtKB" id="Q9Z2H5"/>
    </source>
</evidence>
<evidence type="ECO:0000255" key="4">
    <source>
        <dbReference type="PROSITE-ProRule" id="PRU00084"/>
    </source>
</evidence>
<evidence type="ECO:0000256" key="5">
    <source>
        <dbReference type="SAM" id="MobiDB-lite"/>
    </source>
</evidence>
<evidence type="ECO:0000269" key="6">
    <source>
    </source>
</evidence>
<evidence type="ECO:0000303" key="7">
    <source>
    </source>
</evidence>
<evidence type="ECO:0000312" key="8">
    <source>
        <dbReference type="RGD" id="71087"/>
    </source>
</evidence>
<evidence type="ECO:0007744" key="9">
    <source>
    </source>
</evidence>
<evidence type="ECO:0007744" key="10">
    <source>
    </source>
</evidence>
<accession>Q9WTP0</accession>
<accession>Q9WTP1</accession>
<name>E41L1_RAT</name>
<gene>
    <name evidence="8" type="primary">Epb41l1</name>
    <name evidence="8" type="synonym">Epb4.1l1</name>
</gene>
<feature type="chain" id="PRO_0000281128" description="Band 4.1-like protein 1">
    <location>
        <begin position="1"/>
        <end position="879"/>
    </location>
</feature>
<feature type="domain" description="FERM" evidence="4">
    <location>
        <begin position="97"/>
        <end position="378"/>
    </location>
</feature>
<feature type="region of interest" description="Disordered" evidence="5">
    <location>
        <begin position="1"/>
        <end position="64"/>
    </location>
</feature>
<feature type="region of interest" description="Disordered" evidence="5">
    <location>
        <begin position="428"/>
        <end position="501"/>
    </location>
</feature>
<feature type="region of interest" description="Spectrin--actin-binding" evidence="1">
    <location>
        <begin position="483"/>
        <end position="541"/>
    </location>
</feature>
<feature type="region of interest" description="Disordered" evidence="5">
    <location>
        <begin position="514"/>
        <end position="596"/>
    </location>
</feature>
<feature type="region of interest" description="Disordered" evidence="5">
    <location>
        <begin position="633"/>
        <end position="687"/>
    </location>
</feature>
<feature type="region of interest" description="Disordered" evidence="5">
    <location>
        <begin position="718"/>
        <end position="742"/>
    </location>
</feature>
<feature type="region of interest" description="C-terminal (CTD)">
    <location>
        <begin position="744"/>
        <end position="879"/>
    </location>
</feature>
<feature type="compositionally biased region" description="Low complexity" evidence="5">
    <location>
        <begin position="17"/>
        <end position="35"/>
    </location>
</feature>
<feature type="compositionally biased region" description="Basic and acidic residues" evidence="5">
    <location>
        <begin position="38"/>
        <end position="50"/>
    </location>
</feature>
<feature type="compositionally biased region" description="Basic and acidic residues" evidence="5">
    <location>
        <begin position="444"/>
        <end position="501"/>
    </location>
</feature>
<feature type="compositionally biased region" description="Basic and acidic residues" evidence="5">
    <location>
        <begin position="514"/>
        <end position="538"/>
    </location>
</feature>
<feature type="compositionally biased region" description="Basic and acidic residues" evidence="5">
    <location>
        <begin position="550"/>
        <end position="577"/>
    </location>
</feature>
<feature type="compositionally biased region" description="Basic and acidic residues" evidence="5">
    <location>
        <begin position="635"/>
        <end position="650"/>
    </location>
</feature>
<feature type="compositionally biased region" description="Polar residues" evidence="5">
    <location>
        <begin position="718"/>
        <end position="728"/>
    </location>
</feature>
<feature type="modified residue" description="Phosphothreonine" evidence="3">
    <location>
        <position position="30"/>
    </location>
</feature>
<feature type="modified residue" description="Phosphoserine" evidence="10">
    <location>
        <position position="75"/>
    </location>
</feature>
<feature type="modified residue" description="Phosphothreonine" evidence="2">
    <location>
        <position position="79"/>
    </location>
</feature>
<feature type="modified residue" description="Phosphotyrosine" evidence="3">
    <location>
        <position position="343"/>
    </location>
</feature>
<feature type="modified residue" description="Phosphoserine" evidence="10">
    <location>
        <position position="378"/>
    </location>
</feature>
<feature type="modified residue" description="Phosphoserine" evidence="10">
    <location>
        <position position="430"/>
    </location>
</feature>
<feature type="modified residue" description="Phosphoserine" evidence="2">
    <location>
        <position position="437"/>
    </location>
</feature>
<feature type="modified residue" description="Phosphoserine" evidence="10">
    <location>
        <position position="461"/>
    </location>
</feature>
<feature type="modified residue" description="Phosphoserine" evidence="10">
    <location>
        <position position="466"/>
    </location>
</feature>
<feature type="modified residue" description="Phosphothreonine" evidence="2">
    <location>
        <position position="475"/>
    </location>
</feature>
<feature type="modified residue" description="Phosphoserine" evidence="9">
    <location>
        <position position="510"/>
    </location>
</feature>
<feature type="modified residue" description="Phosphoserine" evidence="2">
    <location>
        <position position="540"/>
    </location>
</feature>
<feature type="modified residue" description="Phosphoserine" evidence="2">
    <location>
        <position position="541"/>
    </location>
</feature>
<feature type="modified residue" description="Phosphoserine" evidence="2">
    <location>
        <position position="544"/>
    </location>
</feature>
<feature type="modified residue" description="Phosphoserine" evidence="10">
    <location>
        <position position="546"/>
    </location>
</feature>
<feature type="modified residue" description="Phosphothreonine" evidence="10">
    <location>
        <position position="550"/>
    </location>
</feature>
<feature type="modified residue" description="Phosphoserine" evidence="10">
    <location>
        <position position="564"/>
    </location>
</feature>
<feature type="modified residue" description="Phosphoserine" evidence="10">
    <location>
        <position position="578"/>
    </location>
</feature>
<feature type="modified residue" description="Phosphothreonine" evidence="10">
    <location>
        <position position="580"/>
    </location>
</feature>
<feature type="modified residue" description="Phosphoserine" evidence="3">
    <location>
        <position position="639"/>
    </location>
</feature>
<feature type="modified residue" description="Phosphoserine" evidence="10">
    <location>
        <position position="648"/>
    </location>
</feature>
<feature type="modified residue" description="Phosphoserine" evidence="10">
    <location>
        <position position="650"/>
    </location>
</feature>
<feature type="modified residue" description="Phosphoserine" evidence="10">
    <location>
        <position position="665"/>
    </location>
</feature>
<feature type="modified residue" description="Phosphoserine" evidence="10">
    <location>
        <position position="666"/>
    </location>
</feature>
<feature type="modified residue" description="Phosphoserine" evidence="3">
    <location>
        <position position="671"/>
    </location>
</feature>
<feature type="modified residue" description="Phosphoserine" evidence="10">
    <location>
        <position position="677"/>
    </location>
</feature>
<feature type="modified residue" description="Phosphoserine" evidence="3">
    <location>
        <position position="684"/>
    </location>
</feature>
<feature type="modified residue" description="Phosphothreonine" evidence="3">
    <location>
        <position position="685"/>
    </location>
</feature>
<feature type="modified residue" description="Phosphoserine" evidence="3">
    <location>
        <position position="721"/>
    </location>
</feature>
<feature type="modified residue" description="Phosphoserine" evidence="10">
    <location>
        <position position="782"/>
    </location>
</feature>
<feature type="modified residue" description="Phosphoserine" evidence="10">
    <location>
        <position position="868"/>
    </location>
</feature>
<feature type="splice variant" id="VSP_023981" description="In isoform L." evidence="7">
    <original>E</original>
    <variation>EAQRIQDTSRQDLVPGTATGLEMFTQKSLAASPEGSEHWVFIERVYTRPEDLGLLTVAATQRKESGSSLSGILADGRLSKVDILVDKFKVEVATEETVRTRRTSTQQQGKMLASPEDFETVREEDRGGPGEATSTDKLPEGSRLKLRNHGVSNGQLESQVEWGLERPQTWGRPTAAGLGPVQGEVLSPTSDKGGLQSFLLDPAQAEARADSSDETDTSFAERSFCLHYGEKDSEDQLLAPPSEHREEHPDALPGDGTWLELAGVHTENWELKSSDPRASAPGSSQHKDQAHKAPSAEEAWTPRDHGRPDDPQGAAVGQTFEEVWENTQQRLEGELVQPLASVAEDEVPTNMDWMGKTEKSPPARRKKSPPGRGGGVHLDAQACALLRTIPPCVRKPARPDQGSFLPKEKGTVSPPAVEPETEDRETVSPLPVSSGHTEVLAAMEGTSLSPLPPGSRGPSESREFFRDQFPVVLKYIHLPEESPVPKDPHGDRKAPPVASKKPRFVPEGSEEPVLLGELMFPSGKQETSLQDWDQGGSQEDISKTSVANKIRIFETHGAEACRASQGEMRSLPHELPSGASPGQVEQQDNLLDLGFVQLQPPGDLATPTTYHQERCTDPELVSPDSGCETTLEEATGSKSGDAGREDKSSFRRLAPNTPGKGGRLRFASPPGPQ</variation>
    <location>
        <position position="556"/>
    </location>
</feature>
<feature type="modified residue" description="Phosphoserine" evidence="10">
    <location sequence="Q9WTP0-2">
        <position position="583"/>
    </location>
</feature>
<feature type="modified residue" description="Phosphoserine" evidence="10">
    <location sequence="Q9WTP0-2">
        <position position="587"/>
    </location>
</feature>
<feature type="modified residue" description="Phosphoserine" evidence="10">
    <location sequence="Q9WTP0-2">
        <position position="669"/>
    </location>
</feature>
<feature type="modified residue" description="Phosphoserine" evidence="10">
    <location sequence="Q9WTP0-2">
        <position position="742"/>
    </location>
</feature>
<feature type="modified residue" description="Phosphoserine" evidence="10">
    <location sequence="Q9WTP0-2">
        <position position="766"/>
    </location>
</feature>
<feature type="modified residue" description="Phosphoserine" evidence="10">
    <location sequence="Q9WTP0-2">
        <position position="968"/>
    </location>
</feature>
<feature type="modified residue" description="Phosphoserine" evidence="10">
    <location sequence="Q9WTP0-2">
        <position position="1092"/>
    </location>
</feature>
<feature type="modified residue" description="Phosphoserine" evidence="10">
    <location sequence="Q9WTP0-2">
        <position position="1223"/>
    </location>
</feature>
<sequence length="879" mass="98243">MTTETGPDSEVKKAQEETPQQPEAAAAVTTPVTPAGHSHPETNSNEKHLTQQDTRPAEQSLDMEEKDYCEADGLSERTTPSKAQKSPQKIAKKFKSATCRVTLLDASEYECEVEKHGRGQVLFDLVCEHLNLLEKDYFGLTFCDADSQKNWLDPSKEIKKQIRSSPWNFAFTVKFYPPDPAQLTEDITRYYLCLQLRADIITGRLPCSFVTHALLGSYAVQAELGDHDTEEHVGNYVSELRFAPNQTRELEERIMELHKTYRGMTPGEAEIHFLENAKKLSMYGVDLHHAKDSEGIDIMLGVCANGLLIYRDRLRINRFAWPKILKISYKRSNFYIKIRPGEYEQFESTIGFKLPNHRSAKRLWKVCIEHHTFFRLVSPEPPPKGFLVMGSKFRYSGRTQAQTRQASALIDRPAPFFERSSSKRYTMSRSLDGAEFSRPASVSENHDAGPDGDKREDDAESGGRRSEAEEGEVRTPTKIKELKPEQETTPRHKQEFLDKPEDVLLKHQASINELKRTLKEPNSKLIHRDRDWERERRLPSSPASPSPKGTPEKASERAGLREGSEEKVKPPRPRAPESDTGDEDQDQERDAVFLKDNHLAIERKCSSITVSSTSSLEAEVDFTVIGDYHGGAFEDFSRSLPELDRDKSDSETEGLVFARDLKGPSSQEDESGGIEDSPDRGACSTPELPQFESVKAETMTVSSLAIRKKIEPEAMLQSRVSTADSTQVDGGAPAAKDFMTTPPCITTETISTTMENSLKSGKGAAAMIPGPQTVATEIRSLSPIIGKDVLTSTYGATAETLSTSTTTHVTKTVKGGFSETRIEKRIIITGDEDVDQDQALALAIKEAKLQHPDMLVTKAVVYRETDPSPEERDKKPQES</sequence>
<comment type="function">
    <text evidence="1">May function to confer stability and plasticity to neuronal membrane via multiple interactions, including the spectrin-actin-based cytoskeleton, integral membrane channels and membrane-associated guanylate kinases.</text>
</comment>
<comment type="subunit">
    <text evidence="1">Interacts with AGAP2.</text>
</comment>
<comment type="subcellular location">
    <subcellularLocation>
        <location evidence="1">Cytoplasm</location>
        <location evidence="1">Cytoskeleton</location>
    </subcellularLocation>
</comment>
<comment type="alternative products">
    <event type="alternative splicing"/>
    <isoform>
        <id>Q9WTP0-1</id>
        <name>S</name>
        <sequence type="displayed"/>
    </isoform>
    <isoform>
        <id>Q9WTP0-2</id>
        <name>L</name>
        <sequence type="described" ref="VSP_023981"/>
    </isoform>
    <text>Additional isoforms seem to exist.</text>
</comment>
<comment type="tissue specificity">
    <text evidence="6">Highest expression in brain, lower in heart and kidney. Within the brain, highest expression in cerebellum.</text>
</comment>
<keyword id="KW-0009">Actin-binding</keyword>
<keyword id="KW-0025">Alternative splicing</keyword>
<keyword id="KW-0963">Cytoplasm</keyword>
<keyword id="KW-0206">Cytoskeleton</keyword>
<keyword id="KW-0597">Phosphoprotein</keyword>
<keyword id="KW-1185">Reference proteome</keyword>
<reference key="1">
    <citation type="journal article" date="1999" name="Brain Res. Mol. Brain Res.">
        <title>Molecular characterization of a new member of the protein 4.1 family (brain 4.1) in rat brain.</title>
        <authorList>
            <person name="Yamakawa H."/>
            <person name="Ohara R."/>
            <person name="Nakajima D."/>
            <person name="Nakayama M."/>
            <person name="Ohara O."/>
        </authorList>
    </citation>
    <scope>NUCLEOTIDE SEQUENCE [MRNA] (ISOFORMS S AND L)</scope>
    <scope>TISSUE SPECIFICITY</scope>
    <source>
        <strain>Sprague-Dawley</strain>
        <tissue>Brain</tissue>
    </source>
</reference>
<reference key="2">
    <citation type="journal article" date="2006" name="Proc. Natl. Acad. Sci. U.S.A.">
        <title>Quantitative phosphoproteomics of vasopressin-sensitive renal cells: regulation of aquaporin-2 phosphorylation at two sites.</title>
        <authorList>
            <person name="Hoffert J.D."/>
            <person name="Pisitkun T."/>
            <person name="Wang G."/>
            <person name="Shen R.-F."/>
            <person name="Knepper M.A."/>
        </authorList>
    </citation>
    <scope>PHOSPHORYLATION [LARGE SCALE ANALYSIS] AT SER-510</scope>
    <scope>IDENTIFICATION BY MASS SPECTROMETRY [LARGE SCALE ANALYSIS]</scope>
</reference>
<reference key="3">
    <citation type="journal article" date="2012" name="Nat. Commun.">
        <title>Quantitative maps of protein phosphorylation sites across 14 different rat organs and tissues.</title>
        <authorList>
            <person name="Lundby A."/>
            <person name="Secher A."/>
            <person name="Lage K."/>
            <person name="Nordsborg N.B."/>
            <person name="Dmytriyev A."/>
            <person name="Lundby C."/>
            <person name="Olsen J.V."/>
        </authorList>
    </citation>
    <scope>PHOSPHORYLATION [LARGE SCALE ANALYSIS] AT SER-75; SER-378; SER-430; SER-461; SER-466; SER-546; THR-550; SER-564; SER-578; THR-580; SER-648; SER-650; SER-665; SER-666; SER-677; SER-782 AND SER-868</scope>
    <scope>PHOSPHORYLATION [LARGE SCALE ANALYSIS] AT SER-583; SER-587; SER-669; SER-742; SER-766; SER-968; SER-1092 AND SER-1223 (ISOFORM L)</scope>
    <scope>IDENTIFICATION BY MASS SPECTROMETRY [LARGE SCALE ANALYSIS]</scope>
</reference>
<protein>
    <recommendedName>
        <fullName>Band 4.1-like protein 1</fullName>
    </recommendedName>
    <alternativeName>
        <fullName evidence="8">Erythrocyte membrane protein band 4.1-like 1</fullName>
    </alternativeName>
    <alternativeName>
        <fullName>Neuronal protein 4.1</fullName>
        <shortName>4.1N</shortName>
    </alternativeName>
</protein>
<organism>
    <name type="scientific">Rattus norvegicus</name>
    <name type="common">Rat</name>
    <dbReference type="NCBI Taxonomy" id="10116"/>
    <lineage>
        <taxon>Eukaryota</taxon>
        <taxon>Metazoa</taxon>
        <taxon>Chordata</taxon>
        <taxon>Craniata</taxon>
        <taxon>Vertebrata</taxon>
        <taxon>Euteleostomi</taxon>
        <taxon>Mammalia</taxon>
        <taxon>Eutheria</taxon>
        <taxon>Euarchontoglires</taxon>
        <taxon>Glires</taxon>
        <taxon>Rodentia</taxon>
        <taxon>Myomorpha</taxon>
        <taxon>Muroidea</taxon>
        <taxon>Muridae</taxon>
        <taxon>Murinae</taxon>
        <taxon>Rattus</taxon>
    </lineage>
</organism>
<proteinExistence type="evidence at protein level"/>
<dbReference type="EMBL" id="AB019256">
    <property type="protein sequence ID" value="BAA76624.1"/>
    <property type="molecule type" value="mRNA"/>
</dbReference>
<dbReference type="EMBL" id="AB019257">
    <property type="protein sequence ID" value="BAA76625.1"/>
    <property type="molecule type" value="mRNA"/>
</dbReference>
<dbReference type="RefSeq" id="NP_742087.1">
    <molecule id="Q9WTP0-1"/>
    <property type="nucleotide sequence ID" value="NM_172090.4"/>
</dbReference>
<dbReference type="RefSeq" id="XP_063140506.1">
    <molecule id="Q9WTP0-1"/>
    <property type="nucleotide sequence ID" value="XM_063284436.1"/>
</dbReference>
<dbReference type="SMR" id="Q9WTP0"/>
<dbReference type="BioGRID" id="248761">
    <property type="interactions" value="3"/>
</dbReference>
<dbReference type="FunCoup" id="Q9WTP0">
    <property type="interactions" value="923"/>
</dbReference>
<dbReference type="IntAct" id="Q9WTP0">
    <property type="interactions" value="2"/>
</dbReference>
<dbReference type="MINT" id="Q9WTP0"/>
<dbReference type="STRING" id="10116.ENSRNOP00000074285"/>
<dbReference type="GlyGen" id="Q9WTP0">
    <property type="glycosylation" value="2 sites, 1 O-linked glycan (1 site)"/>
</dbReference>
<dbReference type="iPTMnet" id="Q9WTP0"/>
<dbReference type="PhosphoSitePlus" id="Q9WTP0"/>
<dbReference type="SwissPalm" id="Q9WTP0"/>
<dbReference type="jPOST" id="Q9WTP0"/>
<dbReference type="PaxDb" id="10116-ENSRNOP00000052108"/>
<dbReference type="Ensembl" id="ENSRNOT00000083476.2">
    <molecule id="Q9WTP0-1"/>
    <property type="protein sequence ID" value="ENSRNOP00000071547.2"/>
    <property type="gene ID" value="ENSRNOG00000057817.2"/>
</dbReference>
<dbReference type="GeneID" id="59317"/>
<dbReference type="KEGG" id="rno:59317"/>
<dbReference type="UCSC" id="RGD:71087">
    <molecule id="Q9WTP0-1"/>
    <property type="organism name" value="rat"/>
</dbReference>
<dbReference type="AGR" id="RGD:71087"/>
<dbReference type="CTD" id="2036"/>
<dbReference type="RGD" id="71087">
    <property type="gene designation" value="Epb41l1"/>
</dbReference>
<dbReference type="eggNOG" id="KOG3527">
    <property type="taxonomic scope" value="Eukaryota"/>
</dbReference>
<dbReference type="GeneTree" id="ENSGT00940000158442"/>
<dbReference type="InParanoid" id="Q9WTP0"/>
<dbReference type="PhylomeDB" id="Q9WTP0"/>
<dbReference type="Reactome" id="R-RNO-399719">
    <property type="pathway name" value="Trafficking of AMPA receptors"/>
</dbReference>
<dbReference type="Reactome" id="R-RNO-6794361">
    <property type="pathway name" value="Neurexins and neuroligins"/>
</dbReference>
<dbReference type="PRO" id="PR:Q9WTP0"/>
<dbReference type="Proteomes" id="UP000002494">
    <property type="component" value="Chromosome 3"/>
</dbReference>
<dbReference type="GO" id="GO:0005737">
    <property type="term" value="C:cytoplasm"/>
    <property type="evidence" value="ECO:0007669"/>
    <property type="project" value="UniProtKB-KW"/>
</dbReference>
<dbReference type="GO" id="GO:0005856">
    <property type="term" value="C:cytoskeleton"/>
    <property type="evidence" value="ECO:0000318"/>
    <property type="project" value="GO_Central"/>
</dbReference>
<dbReference type="GO" id="GO:0098688">
    <property type="term" value="C:parallel fiber to Purkinje cell synapse"/>
    <property type="evidence" value="ECO:0000314"/>
    <property type="project" value="SynGO"/>
</dbReference>
<dbReference type="GO" id="GO:0005886">
    <property type="term" value="C:plasma membrane"/>
    <property type="evidence" value="ECO:0000318"/>
    <property type="project" value="GO_Central"/>
</dbReference>
<dbReference type="GO" id="GO:0098794">
    <property type="term" value="C:postsynapse"/>
    <property type="evidence" value="ECO:0000314"/>
    <property type="project" value="SynGO"/>
</dbReference>
<dbReference type="GO" id="GO:0014069">
    <property type="term" value="C:postsynaptic density"/>
    <property type="evidence" value="ECO:0000266"/>
    <property type="project" value="RGD"/>
</dbReference>
<dbReference type="GO" id="GO:0098793">
    <property type="term" value="C:presynapse"/>
    <property type="evidence" value="ECO:0000314"/>
    <property type="project" value="SynGO"/>
</dbReference>
<dbReference type="GO" id="GO:0032991">
    <property type="term" value="C:protein-containing complex"/>
    <property type="evidence" value="ECO:0000314"/>
    <property type="project" value="RGD"/>
</dbReference>
<dbReference type="GO" id="GO:0097060">
    <property type="term" value="C:synaptic membrane"/>
    <property type="evidence" value="ECO:0000314"/>
    <property type="project" value="RGD"/>
</dbReference>
<dbReference type="GO" id="GO:0003779">
    <property type="term" value="F:actin binding"/>
    <property type="evidence" value="ECO:0007669"/>
    <property type="project" value="UniProtKB-KW"/>
</dbReference>
<dbReference type="GO" id="GO:0005102">
    <property type="term" value="F:signaling receptor binding"/>
    <property type="evidence" value="ECO:0000353"/>
    <property type="project" value="RGD"/>
</dbReference>
<dbReference type="GO" id="GO:0005198">
    <property type="term" value="F:structural molecule activity"/>
    <property type="evidence" value="ECO:0007669"/>
    <property type="project" value="InterPro"/>
</dbReference>
<dbReference type="GO" id="GO:0031032">
    <property type="term" value="P:actomyosin structure organization"/>
    <property type="evidence" value="ECO:0000318"/>
    <property type="project" value="GO_Central"/>
</dbReference>
<dbReference type="GO" id="GO:0030866">
    <property type="term" value="P:cortical actin cytoskeleton organization"/>
    <property type="evidence" value="ECO:0007669"/>
    <property type="project" value="InterPro"/>
</dbReference>
<dbReference type="GO" id="GO:0099145">
    <property type="term" value="P:regulation of exocytic insertion of neurotransmitter receptor to postsynaptic membrane"/>
    <property type="evidence" value="ECO:0000266"/>
    <property type="project" value="RGD"/>
</dbReference>
<dbReference type="CDD" id="cd14473">
    <property type="entry name" value="FERM_B-lobe"/>
    <property type="match status" value="1"/>
</dbReference>
<dbReference type="CDD" id="cd13184">
    <property type="entry name" value="FERM_C_4_1_family"/>
    <property type="match status" value="1"/>
</dbReference>
<dbReference type="CDD" id="cd17201">
    <property type="entry name" value="FERM_F1_EPB41L1"/>
    <property type="match status" value="1"/>
</dbReference>
<dbReference type="FunFam" id="1.20.80.10:FF:000001">
    <property type="entry name" value="Erythrocyte membrane protein band 4.1"/>
    <property type="match status" value="1"/>
</dbReference>
<dbReference type="FunFam" id="2.30.29.30:FF:000001">
    <property type="entry name" value="Erythrocyte membrane protein band 4.1"/>
    <property type="match status" value="1"/>
</dbReference>
<dbReference type="FunFam" id="3.10.20.90:FF:000002">
    <property type="entry name" value="Erythrocyte protein band 4.1-like 3"/>
    <property type="match status" value="1"/>
</dbReference>
<dbReference type="Gene3D" id="1.20.80.10">
    <property type="match status" value="1"/>
</dbReference>
<dbReference type="Gene3D" id="3.10.20.90">
    <property type="entry name" value="Phosphatidylinositol 3-kinase Catalytic Subunit, Chain A, domain 1"/>
    <property type="match status" value="1"/>
</dbReference>
<dbReference type="Gene3D" id="2.30.29.30">
    <property type="entry name" value="Pleckstrin-homology domain (PH domain)/Phosphotyrosine-binding domain (PTB)"/>
    <property type="match status" value="1"/>
</dbReference>
<dbReference type="InterPro" id="IPR008379">
    <property type="entry name" value="Band_4.1_C"/>
</dbReference>
<dbReference type="InterPro" id="IPR019749">
    <property type="entry name" value="Band_41_domain"/>
</dbReference>
<dbReference type="InterPro" id="IPR000798">
    <property type="entry name" value="Ez/rad/moesin-like"/>
</dbReference>
<dbReference type="InterPro" id="IPR014847">
    <property type="entry name" value="FA"/>
</dbReference>
<dbReference type="InterPro" id="IPR014352">
    <property type="entry name" value="FERM/acyl-CoA-bd_prot_sf"/>
</dbReference>
<dbReference type="InterPro" id="IPR035963">
    <property type="entry name" value="FERM_2"/>
</dbReference>
<dbReference type="InterPro" id="IPR019748">
    <property type="entry name" value="FERM_central"/>
</dbReference>
<dbReference type="InterPro" id="IPR019747">
    <property type="entry name" value="FERM_CS"/>
</dbReference>
<dbReference type="InterPro" id="IPR000299">
    <property type="entry name" value="FERM_domain"/>
</dbReference>
<dbReference type="InterPro" id="IPR018979">
    <property type="entry name" value="FERM_N"/>
</dbReference>
<dbReference type="InterPro" id="IPR018980">
    <property type="entry name" value="FERM_PH-like_C"/>
</dbReference>
<dbReference type="InterPro" id="IPR011993">
    <property type="entry name" value="PH-like_dom_sf"/>
</dbReference>
<dbReference type="InterPro" id="IPR007477">
    <property type="entry name" value="SAB_dom"/>
</dbReference>
<dbReference type="InterPro" id="IPR029071">
    <property type="entry name" value="Ubiquitin-like_domsf"/>
</dbReference>
<dbReference type="PANTHER" id="PTHR23280">
    <property type="entry name" value="4.1 G PROTEIN"/>
    <property type="match status" value="1"/>
</dbReference>
<dbReference type="PANTHER" id="PTHR23280:SF24">
    <property type="entry name" value="BAND 4.1-LIKE PROTEIN 1"/>
    <property type="match status" value="1"/>
</dbReference>
<dbReference type="Pfam" id="PF05902">
    <property type="entry name" value="4_1_CTD"/>
    <property type="match status" value="1"/>
</dbReference>
<dbReference type="Pfam" id="PF08736">
    <property type="entry name" value="FA"/>
    <property type="match status" value="1"/>
</dbReference>
<dbReference type="Pfam" id="PF09380">
    <property type="entry name" value="FERM_C"/>
    <property type="match status" value="1"/>
</dbReference>
<dbReference type="Pfam" id="PF00373">
    <property type="entry name" value="FERM_M"/>
    <property type="match status" value="1"/>
</dbReference>
<dbReference type="Pfam" id="PF09379">
    <property type="entry name" value="FERM_N"/>
    <property type="match status" value="1"/>
</dbReference>
<dbReference type="Pfam" id="PF04382">
    <property type="entry name" value="SAB"/>
    <property type="match status" value="1"/>
</dbReference>
<dbReference type="PIRSF" id="PIRSF002304">
    <property type="entry name" value="Membrane_skeletal_4_1"/>
    <property type="match status" value="1"/>
</dbReference>
<dbReference type="PRINTS" id="PR00935">
    <property type="entry name" value="BAND41"/>
</dbReference>
<dbReference type="PRINTS" id="PR00661">
    <property type="entry name" value="ERMFAMILY"/>
</dbReference>
<dbReference type="SMART" id="SM00295">
    <property type="entry name" value="B41"/>
    <property type="match status" value="1"/>
</dbReference>
<dbReference type="SMART" id="SM01195">
    <property type="entry name" value="FA"/>
    <property type="match status" value="1"/>
</dbReference>
<dbReference type="SMART" id="SM01196">
    <property type="entry name" value="FERM_C"/>
    <property type="match status" value="1"/>
</dbReference>
<dbReference type="SUPFAM" id="SSF50729">
    <property type="entry name" value="PH domain-like"/>
    <property type="match status" value="1"/>
</dbReference>
<dbReference type="SUPFAM" id="SSF47031">
    <property type="entry name" value="Second domain of FERM"/>
    <property type="match status" value="1"/>
</dbReference>
<dbReference type="SUPFAM" id="SSF54236">
    <property type="entry name" value="Ubiquitin-like"/>
    <property type="match status" value="1"/>
</dbReference>
<dbReference type="PROSITE" id="PS00660">
    <property type="entry name" value="FERM_1"/>
    <property type="match status" value="1"/>
</dbReference>
<dbReference type="PROSITE" id="PS00661">
    <property type="entry name" value="FERM_2"/>
    <property type="match status" value="1"/>
</dbReference>
<dbReference type="PROSITE" id="PS50057">
    <property type="entry name" value="FERM_3"/>
    <property type="match status" value="1"/>
</dbReference>